<keyword id="KW-0963">Cytoplasm</keyword>
<keyword id="KW-0210">Decarboxylase</keyword>
<keyword id="KW-0456">Lyase</keyword>
<keyword id="KW-0627">Porphyrin biosynthesis</keyword>
<protein>
    <recommendedName>
        <fullName evidence="1">Uroporphyrinogen decarboxylase</fullName>
        <shortName evidence="1">UPD</shortName>
        <shortName evidence="1">URO-D</shortName>
        <ecNumber evidence="1">4.1.1.37</ecNumber>
    </recommendedName>
</protein>
<feature type="chain" id="PRO_1000204239" description="Uroporphyrinogen decarboxylase">
    <location>
        <begin position="1"/>
        <end position="346"/>
    </location>
</feature>
<feature type="binding site" evidence="1">
    <location>
        <begin position="21"/>
        <end position="25"/>
    </location>
    <ligand>
        <name>substrate</name>
    </ligand>
</feature>
<feature type="binding site" evidence="1">
    <location>
        <position position="71"/>
    </location>
    <ligand>
        <name>substrate</name>
    </ligand>
</feature>
<feature type="binding site" evidence="1">
    <location>
        <position position="146"/>
    </location>
    <ligand>
        <name>substrate</name>
    </ligand>
</feature>
<feature type="binding site" evidence="1">
    <location>
        <position position="201"/>
    </location>
    <ligand>
        <name>substrate</name>
    </ligand>
</feature>
<feature type="binding site" evidence="1">
    <location>
        <position position="316"/>
    </location>
    <ligand>
        <name>substrate</name>
    </ligand>
</feature>
<feature type="site" description="Transition state stabilizer" evidence="1">
    <location>
        <position position="71"/>
    </location>
</feature>
<reference key="1">
    <citation type="journal article" date="2009" name="BMC Genomics">
        <title>Analysis of the Rickettsia africae genome reveals that virulence acquisition in Rickettsia species may be explained by genome reduction.</title>
        <authorList>
            <person name="Fournier P.-E."/>
            <person name="El Karkouri K."/>
            <person name="Leroy Q."/>
            <person name="Robert C."/>
            <person name="Giumelli B."/>
            <person name="Renesto P."/>
            <person name="Socolovschi C."/>
            <person name="Parola P."/>
            <person name="Audic S."/>
            <person name="Raoult D."/>
        </authorList>
    </citation>
    <scope>NUCLEOTIDE SEQUENCE [LARGE SCALE GENOMIC DNA]</scope>
    <source>
        <strain>ESF-5</strain>
    </source>
</reference>
<accession>C3PM28</accession>
<name>DCUP_RICAE</name>
<organism>
    <name type="scientific">Rickettsia africae (strain ESF-5)</name>
    <dbReference type="NCBI Taxonomy" id="347255"/>
    <lineage>
        <taxon>Bacteria</taxon>
        <taxon>Pseudomonadati</taxon>
        <taxon>Pseudomonadota</taxon>
        <taxon>Alphaproteobacteria</taxon>
        <taxon>Rickettsiales</taxon>
        <taxon>Rickettsiaceae</taxon>
        <taxon>Rickettsieae</taxon>
        <taxon>Rickettsia</taxon>
        <taxon>spotted fever group</taxon>
    </lineage>
</organism>
<comment type="function">
    <text evidence="1">Catalyzes the decarboxylation of four acetate groups of uroporphyrinogen-III to yield coproporphyrinogen-III.</text>
</comment>
<comment type="catalytic activity">
    <reaction evidence="1">
        <text>uroporphyrinogen III + 4 H(+) = coproporphyrinogen III + 4 CO2</text>
        <dbReference type="Rhea" id="RHEA:19865"/>
        <dbReference type="ChEBI" id="CHEBI:15378"/>
        <dbReference type="ChEBI" id="CHEBI:16526"/>
        <dbReference type="ChEBI" id="CHEBI:57308"/>
        <dbReference type="ChEBI" id="CHEBI:57309"/>
        <dbReference type="EC" id="4.1.1.37"/>
    </reaction>
</comment>
<comment type="pathway">
    <text evidence="1">Porphyrin-containing compound metabolism; protoporphyrin-IX biosynthesis; coproporphyrinogen-III from 5-aminolevulinate: step 4/4.</text>
</comment>
<comment type="subunit">
    <text evidence="1">Homodimer.</text>
</comment>
<comment type="subcellular location">
    <subcellularLocation>
        <location evidence="1">Cytoplasm</location>
    </subcellularLocation>
</comment>
<comment type="similarity">
    <text evidence="1">Belongs to the uroporphyrinogen decarboxylase family.</text>
</comment>
<proteinExistence type="inferred from homology"/>
<gene>
    <name evidence="1" type="primary">hemE</name>
    <name type="ordered locus">RAF_ORF1259</name>
</gene>
<sequence>MKQIINPLKGNNNKVPIWFMRQAGRYLPEYKKVRETTKNFLDFCYDVSKATEVTLQPIKRYGFDAAIIFSDILVLPHALGWEVDFKENIGPILKQFKSQEDFKYLQINPNYKLEKVYEIIKKVKKELPSPISLIGFAGSPWTVMSYMLEGKGKQDFKTSKKFIYENRILAEELLNFITEKTADHLINQAKSGADILKLFDSWSGVLAEEEFTEFVIEPTKKIILKVKEVFPKTPIIAFPKGAGLLYEKFIKEVPIDVLAVDQMVPLKKMKEWSDKVIVQGNLDPVVLLTNKEIIKEKTYKILQVMKGKNFIFNLGHGILPETPTENVEFLIEYVRLYEEKNSNSTF</sequence>
<evidence type="ECO:0000255" key="1">
    <source>
        <dbReference type="HAMAP-Rule" id="MF_00218"/>
    </source>
</evidence>
<dbReference type="EC" id="4.1.1.37" evidence="1"/>
<dbReference type="EMBL" id="CP001612">
    <property type="protein sequence ID" value="ACP54018.1"/>
    <property type="molecule type" value="Genomic_DNA"/>
</dbReference>
<dbReference type="RefSeq" id="WP_012720124.1">
    <property type="nucleotide sequence ID" value="NC_012633.1"/>
</dbReference>
<dbReference type="SMR" id="C3PM28"/>
<dbReference type="KEGG" id="raf:RAF_ORF1259"/>
<dbReference type="HOGENOM" id="CLU_040933_0_0_5"/>
<dbReference type="UniPathway" id="UPA00251">
    <property type="reaction ID" value="UER00321"/>
</dbReference>
<dbReference type="Proteomes" id="UP000002305">
    <property type="component" value="Chromosome"/>
</dbReference>
<dbReference type="GO" id="GO:0005829">
    <property type="term" value="C:cytosol"/>
    <property type="evidence" value="ECO:0007669"/>
    <property type="project" value="TreeGrafter"/>
</dbReference>
<dbReference type="GO" id="GO:0004853">
    <property type="term" value="F:uroporphyrinogen decarboxylase activity"/>
    <property type="evidence" value="ECO:0007669"/>
    <property type="project" value="UniProtKB-UniRule"/>
</dbReference>
<dbReference type="GO" id="GO:0006782">
    <property type="term" value="P:protoporphyrinogen IX biosynthetic process"/>
    <property type="evidence" value="ECO:0007669"/>
    <property type="project" value="UniProtKB-UniRule"/>
</dbReference>
<dbReference type="CDD" id="cd00717">
    <property type="entry name" value="URO-D"/>
    <property type="match status" value="1"/>
</dbReference>
<dbReference type="FunFam" id="3.20.20.210:FF:000007">
    <property type="entry name" value="Uroporphyrinogen decarboxylase"/>
    <property type="match status" value="1"/>
</dbReference>
<dbReference type="Gene3D" id="3.20.20.210">
    <property type="match status" value="1"/>
</dbReference>
<dbReference type="HAMAP" id="MF_00218">
    <property type="entry name" value="URO_D"/>
    <property type="match status" value="1"/>
</dbReference>
<dbReference type="InterPro" id="IPR038071">
    <property type="entry name" value="UROD/MetE-like_sf"/>
</dbReference>
<dbReference type="InterPro" id="IPR006361">
    <property type="entry name" value="Uroporphyrinogen_deCO2ase_HemE"/>
</dbReference>
<dbReference type="InterPro" id="IPR000257">
    <property type="entry name" value="Uroporphyrinogen_deCOase"/>
</dbReference>
<dbReference type="NCBIfam" id="TIGR01464">
    <property type="entry name" value="hemE"/>
    <property type="match status" value="1"/>
</dbReference>
<dbReference type="PANTHER" id="PTHR21091">
    <property type="entry name" value="METHYLTETRAHYDROFOLATE:HOMOCYSTEINE METHYLTRANSFERASE RELATED"/>
    <property type="match status" value="1"/>
</dbReference>
<dbReference type="PANTHER" id="PTHR21091:SF169">
    <property type="entry name" value="UROPORPHYRINOGEN DECARBOXYLASE"/>
    <property type="match status" value="1"/>
</dbReference>
<dbReference type="Pfam" id="PF01208">
    <property type="entry name" value="URO-D"/>
    <property type="match status" value="1"/>
</dbReference>
<dbReference type="SUPFAM" id="SSF51726">
    <property type="entry name" value="UROD/MetE-like"/>
    <property type="match status" value="1"/>
</dbReference>
<dbReference type="PROSITE" id="PS00906">
    <property type="entry name" value="UROD_1"/>
    <property type="match status" value="1"/>
</dbReference>
<dbReference type="PROSITE" id="PS00907">
    <property type="entry name" value="UROD_2"/>
    <property type="match status" value="1"/>
</dbReference>